<proteinExistence type="evidence at protein level"/>
<sequence>MAAMAPGGSGSGGGVNPFLSDSDEDDDEVAATEERRAVLRLGAGSGLDPGSAGSLSPQDPVALGSSARPGLPGEASAAAVALGGTGETPARLSIDAIAAQLLRDQYLLTALELHTELLESGRELPRLRDYFSNPGNFERQSGTPPGMGAPGVPGAAGVGGAGGREPSTASGGGQLNRAGSISTLDSLDFARYSDDGNRETDEKVAVLEFELRKAKETIQALRANLTKAAEHEVPLQERKNYKSSPEIQEPIKPLEKRALNFLVNEFLLKNNYKLTSITFSDENDDQDFELWDDVGLNIPKPPDLLQLYRDFGNHQVTGKDLVDVASGVEEDELEALTPIISNLPPTLETPQPAENSMLVQKLEDKISLLNSEKWSLMEQIRRLKSEMDFLKNEHFAIPAVCDSVQPPLDQLPHKDSEDSGQHPDVNSSDKGKNTDIHLSISDEADSTIPKENSPNSFPRREREGMPPSSLSSKKTVHFDKPNRKLSPAFHQALLSFCRMSADSRLGYEVSRIADSEKSVMLMLGRCLPHIVPNVLLAKREELIPLILCTACLHPEPKERDQLLHILFNLIKRPDDEQRQMILTGCVAFARHVGPTRVEAELLPQCWEQINHKYPERRLLVAESCGALAPYLPKEIRSSLVLSMLQQMLMEDKADLVREAVIKSLGIIMGYIDDPDKYHQGFELLLSALGDPSERVVSATHQVFLPAYAAWTTELGNLQSHLILTLLNKIEKLLREGEHGLDEHKLHMYLSALQSLIPSLFALVLQNAPFSSKAKLHGEVPQIEVTRFPRPMSPLQDVSTIIGSREQLAVLLQLYDYQLEQEGTTGWESLLWVVNQLLPQLIEIVGKINVTSTACVHEFSRFFWRLCRTFGKIFTNTKVKPQFQEILRLSEENIDSSAGNGVLTKATVPIYATGVLTCYIQEEDRKLLVGFLEDVMTLLSLSHAPLDSLKASFVELGANPAYHELLLTVLWYGVVHTSALVRCTAARMFELTLRGMSEALVDKRVAPALVTLSSDPEFSVRIATIPAFGTIMETVIQRELLERVKMQLASFLEDPQYQDQHSLHTEIIKTFGRVGPNAEPRFRDEFVIPHLHKLALVNNLQIVDSKRLDIATHLFEAYSALSCCFISEDLMVNHFLPGLRCLRTDMEHLSPEHEVILSSMIKECEQKVENKTVQEPQGSMSIAASLVSEDTKTKFLNKMGQLTTSGAMLANVFQRKK</sequence>
<gene>
    <name evidence="9 11" type="primary">RELCH</name>
    <name evidence="8" type="synonym">KIAA1468</name>
</gene>
<accession>Q9P260</accession>
<name>RELCH_HUMAN</name>
<organism>
    <name type="scientific">Homo sapiens</name>
    <name type="common">Human</name>
    <dbReference type="NCBI Taxonomy" id="9606"/>
    <lineage>
        <taxon>Eukaryota</taxon>
        <taxon>Metazoa</taxon>
        <taxon>Chordata</taxon>
        <taxon>Craniata</taxon>
        <taxon>Vertebrata</taxon>
        <taxon>Euteleostomi</taxon>
        <taxon>Mammalia</taxon>
        <taxon>Eutheria</taxon>
        <taxon>Euarchontoglires</taxon>
        <taxon>Primates</taxon>
        <taxon>Haplorrhini</taxon>
        <taxon>Catarrhini</taxon>
        <taxon>Hominidae</taxon>
        <taxon>Homo</taxon>
    </lineage>
</organism>
<dbReference type="EMBL" id="AC027514">
    <property type="status" value="NOT_ANNOTATED_CDS"/>
    <property type="molecule type" value="Genomic_DNA"/>
</dbReference>
<dbReference type="EMBL" id="AC090396">
    <property type="status" value="NOT_ANNOTATED_CDS"/>
    <property type="molecule type" value="Genomic_DNA"/>
</dbReference>
<dbReference type="EMBL" id="AB040901">
    <property type="protein sequence ID" value="BAA95992.1"/>
    <property type="molecule type" value="mRNA"/>
</dbReference>
<dbReference type="CCDS" id="CCDS11979.2">
    <molecule id="Q9P260-1"/>
</dbReference>
<dbReference type="CCDS" id="CCDS86675.1">
    <molecule id="Q9P260-2"/>
</dbReference>
<dbReference type="RefSeq" id="NP_001333158.1">
    <molecule id="Q9P260-2"/>
    <property type="nucleotide sequence ID" value="NM_001346229.2"/>
</dbReference>
<dbReference type="RefSeq" id="NP_065905.2">
    <molecule id="Q9P260-1"/>
    <property type="nucleotide sequence ID" value="NM_020854.4"/>
</dbReference>
<dbReference type="BioGRID" id="121661">
    <property type="interactions" value="65"/>
</dbReference>
<dbReference type="CORUM" id="Q9P260"/>
<dbReference type="FunCoup" id="Q9P260">
    <property type="interactions" value="1785"/>
</dbReference>
<dbReference type="IntAct" id="Q9P260">
    <property type="interactions" value="18"/>
</dbReference>
<dbReference type="MINT" id="Q9P260"/>
<dbReference type="STRING" id="9606.ENSP00000256858"/>
<dbReference type="GlyGen" id="Q9P260">
    <property type="glycosylation" value="1 site, 1 O-linked glycan (1 site)"/>
</dbReference>
<dbReference type="iPTMnet" id="Q9P260"/>
<dbReference type="PhosphoSitePlus" id="Q9P260"/>
<dbReference type="SwissPalm" id="Q9P260"/>
<dbReference type="BioMuta" id="KIAA1468"/>
<dbReference type="DMDM" id="166218823"/>
<dbReference type="jPOST" id="Q9P260"/>
<dbReference type="MassIVE" id="Q9P260"/>
<dbReference type="PaxDb" id="9606-ENSP00000381198"/>
<dbReference type="PeptideAtlas" id="Q9P260"/>
<dbReference type="ProteomicsDB" id="83734">
    <molecule id="Q9P260-1"/>
</dbReference>
<dbReference type="ProteomicsDB" id="83735">
    <molecule id="Q9P260-2"/>
</dbReference>
<dbReference type="Pumba" id="Q9P260"/>
<dbReference type="Antibodypedia" id="42133">
    <property type="antibodies" value="45 antibodies from 14 providers"/>
</dbReference>
<dbReference type="DNASU" id="57614"/>
<dbReference type="Ensembl" id="ENST00000256858.10">
    <molecule id="Q9P260-2"/>
    <property type="protein sequence ID" value="ENSP00000256858.5"/>
    <property type="gene ID" value="ENSG00000134444.15"/>
</dbReference>
<dbReference type="Ensembl" id="ENST00000398130.6">
    <molecule id="Q9P260-1"/>
    <property type="protein sequence ID" value="ENSP00000381198.2"/>
    <property type="gene ID" value="ENSG00000134444.15"/>
</dbReference>
<dbReference type="GeneID" id="57614"/>
<dbReference type="KEGG" id="hsa:57614"/>
<dbReference type="UCSC" id="uc002lil.4">
    <molecule id="Q9P260-1"/>
    <property type="organism name" value="human"/>
</dbReference>
<dbReference type="AGR" id="HGNC:29289"/>
<dbReference type="CTD" id="57614"/>
<dbReference type="DisGeNET" id="57614"/>
<dbReference type="GeneCards" id="RELCH"/>
<dbReference type="HGNC" id="HGNC:29289">
    <property type="gene designation" value="RELCH"/>
</dbReference>
<dbReference type="HPA" id="ENSG00000134444">
    <property type="expression patterns" value="Low tissue specificity"/>
</dbReference>
<dbReference type="MIM" id="618001">
    <property type="type" value="gene"/>
</dbReference>
<dbReference type="neXtProt" id="NX_Q9P260"/>
<dbReference type="OpenTargets" id="ENSG00000134444"/>
<dbReference type="PharmGKB" id="PA134865247"/>
<dbReference type="VEuPathDB" id="HostDB:ENSG00000134444"/>
<dbReference type="eggNOG" id="KOG0211">
    <property type="taxonomic scope" value="Eukaryota"/>
</dbReference>
<dbReference type="GeneTree" id="ENSGT00390000004385"/>
<dbReference type="HOGENOM" id="CLU_006254_1_0_1"/>
<dbReference type="InParanoid" id="Q9P260"/>
<dbReference type="OMA" id="RQDLNCA"/>
<dbReference type="OrthoDB" id="1695393at2759"/>
<dbReference type="PAN-GO" id="Q9P260">
    <property type="GO annotations" value="3 GO annotations based on evolutionary models"/>
</dbReference>
<dbReference type="PhylomeDB" id="Q9P260"/>
<dbReference type="TreeFam" id="TF329740"/>
<dbReference type="PathwayCommons" id="Q9P260"/>
<dbReference type="SignaLink" id="Q9P260"/>
<dbReference type="BioGRID-ORCS" id="57614">
    <property type="hits" value="6 hits in 1156 CRISPR screens"/>
</dbReference>
<dbReference type="CD-CODE" id="FB4E32DD">
    <property type="entry name" value="Presynaptic clusters and postsynaptic densities"/>
</dbReference>
<dbReference type="ChiTaRS" id="RELCH">
    <property type="organism name" value="human"/>
</dbReference>
<dbReference type="GenomeRNAi" id="57614"/>
<dbReference type="Pharos" id="Q9P260">
    <property type="development level" value="Tdark"/>
</dbReference>
<dbReference type="PRO" id="PR:Q9P260"/>
<dbReference type="Proteomes" id="UP000005640">
    <property type="component" value="Chromosome 18"/>
</dbReference>
<dbReference type="RNAct" id="Q9P260">
    <property type="molecule type" value="protein"/>
</dbReference>
<dbReference type="Bgee" id="ENSG00000134444">
    <property type="expression patterns" value="Expressed in esophagus mucosa and 180 other cell types or tissues"/>
</dbReference>
<dbReference type="ExpressionAtlas" id="Q9P260">
    <property type="expression patterns" value="baseline and differential"/>
</dbReference>
<dbReference type="GO" id="GO:0055037">
    <property type="term" value="C:recycling endosome"/>
    <property type="evidence" value="ECO:0000314"/>
    <property type="project" value="UniProtKB"/>
</dbReference>
<dbReference type="GO" id="GO:0005802">
    <property type="term" value="C:trans-Golgi network"/>
    <property type="evidence" value="ECO:0000314"/>
    <property type="project" value="UniProtKB"/>
</dbReference>
<dbReference type="GO" id="GO:0032367">
    <property type="term" value="P:intracellular cholesterol transport"/>
    <property type="evidence" value="ECO:0000314"/>
    <property type="project" value="UniProtKB"/>
</dbReference>
<dbReference type="FunFam" id="1.25.10.10:FF:000080">
    <property type="entry name" value="lisH domain and HEAT repeat-containing protein KIAA1468 homolog"/>
    <property type="match status" value="1"/>
</dbReference>
<dbReference type="FunFam" id="1.25.10.10:FF:000218">
    <property type="entry name" value="lisH domain and HEAT repeat-containing protein KIAA1468 homolog isoform X1"/>
    <property type="match status" value="1"/>
</dbReference>
<dbReference type="Gene3D" id="1.25.10.10">
    <property type="entry name" value="Leucine-rich Repeat Variant"/>
    <property type="match status" value="2"/>
</dbReference>
<dbReference type="InterPro" id="IPR011989">
    <property type="entry name" value="ARM-like"/>
</dbReference>
<dbReference type="InterPro" id="IPR016024">
    <property type="entry name" value="ARM-type_fold"/>
</dbReference>
<dbReference type="InterPro" id="IPR021133">
    <property type="entry name" value="HEAT_type_2"/>
</dbReference>
<dbReference type="InterPro" id="IPR006594">
    <property type="entry name" value="LisH"/>
</dbReference>
<dbReference type="InterPro" id="IPR040362">
    <property type="entry name" value="RELCH"/>
</dbReference>
<dbReference type="PANTHER" id="PTHR32059">
    <property type="entry name" value="RAB11-BINDING PROTEIN RELCH"/>
    <property type="match status" value="1"/>
</dbReference>
<dbReference type="PANTHER" id="PTHR32059:SF0">
    <property type="entry name" value="RAB11-BINDING PROTEIN RELCH"/>
    <property type="match status" value="1"/>
</dbReference>
<dbReference type="SMART" id="SM00667">
    <property type="entry name" value="LisH"/>
    <property type="match status" value="1"/>
</dbReference>
<dbReference type="SUPFAM" id="SSF48371">
    <property type="entry name" value="ARM repeat"/>
    <property type="match status" value="1"/>
</dbReference>
<dbReference type="PROSITE" id="PS50077">
    <property type="entry name" value="HEAT_REPEAT"/>
    <property type="match status" value="1"/>
</dbReference>
<dbReference type="PROSITE" id="PS50896">
    <property type="entry name" value="LISH"/>
    <property type="match status" value="1"/>
</dbReference>
<feature type="initiator methionine" description="Removed" evidence="14">
    <location>
        <position position="1"/>
    </location>
</feature>
<feature type="chain" id="PRO_0000313093" description="RAB11-binding protein RELCH">
    <location>
        <begin position="2"/>
        <end position="1216"/>
    </location>
</feature>
<feature type="domain" description="LisH" evidence="4">
    <location>
        <begin position="255"/>
        <end position="287"/>
    </location>
</feature>
<feature type="repeat" description="HEAT 1" evidence="10">
    <location>
        <begin position="601"/>
        <end position="639"/>
    </location>
</feature>
<feature type="repeat" description="HEAT 2" evidence="10">
    <location>
        <begin position="640"/>
        <end position="679"/>
    </location>
</feature>
<feature type="repeat" description="HEAT 3" evidence="3">
    <location>
        <begin position="1004"/>
        <end position="1042"/>
    </location>
</feature>
<feature type="region of interest" description="Disordered" evidence="5">
    <location>
        <begin position="1"/>
        <end position="73"/>
    </location>
</feature>
<feature type="region of interest" description="Disordered" evidence="5">
    <location>
        <begin position="135"/>
        <end position="177"/>
    </location>
</feature>
<feature type="region of interest" description="Disordered" evidence="5">
    <location>
        <begin position="401"/>
        <end position="477"/>
    </location>
</feature>
<feature type="region of interest" description="Interaction with RAB11A and RAB11B" evidence="1">
    <location>
        <begin position="497"/>
        <end position="779"/>
    </location>
</feature>
<feature type="coiled-coil region" evidence="2">
    <location>
        <begin position="197"/>
        <end position="231"/>
    </location>
</feature>
<feature type="coiled-coil region" evidence="2">
    <location>
        <begin position="359"/>
        <end position="397"/>
    </location>
</feature>
<feature type="compositionally biased region" description="Acidic residues" evidence="5">
    <location>
        <begin position="21"/>
        <end position="31"/>
    </location>
</feature>
<feature type="compositionally biased region" description="Gly residues" evidence="5">
    <location>
        <begin position="148"/>
        <end position="163"/>
    </location>
</feature>
<feature type="compositionally biased region" description="Basic and acidic residues" evidence="5">
    <location>
        <begin position="411"/>
        <end position="435"/>
    </location>
</feature>
<feature type="modified residue" description="N-acetylalanine" evidence="14">
    <location>
        <position position="2"/>
    </location>
</feature>
<feature type="modified residue" description="Phosphoserine" evidence="14">
    <location>
        <position position="20"/>
    </location>
</feature>
<feature type="modified residue" description="Phosphoserine" evidence="14">
    <location>
        <position position="22"/>
    </location>
</feature>
<feature type="modified residue" description="Phosphothreonine" evidence="1">
    <location>
        <position position="32"/>
    </location>
</feature>
<feature type="modified residue" description="Phosphoserine" evidence="13">
    <location>
        <position position="54"/>
    </location>
</feature>
<feature type="modified residue" description="Phosphoserine" evidence="13">
    <location>
        <position position="56"/>
    </location>
</feature>
<feature type="modified residue" description="Phosphoserine" evidence="12 14 15 16">
    <location>
        <position position="180"/>
    </location>
</feature>
<feature type="modified residue" description="Phosphoserine" evidence="12">
    <location>
        <position position="182"/>
    </location>
</feature>
<feature type="modified residue" description="Phosphothreonine" evidence="12">
    <location>
        <position position="183"/>
    </location>
</feature>
<feature type="modified residue" description="Phosphoserine" evidence="12">
    <location>
        <position position="186"/>
    </location>
</feature>
<feature type="modified residue" description="Phosphoserine" evidence="1">
    <location>
        <position position="385"/>
    </location>
</feature>
<feature type="modified residue" description="Phosphoserine" evidence="15">
    <location>
        <position position="453"/>
    </location>
</feature>
<feature type="modified residue" description="Phosphoserine" evidence="1">
    <location>
        <position position="792"/>
    </location>
</feature>
<feature type="modified residue" description="Phosphoserine" evidence="1">
    <location>
        <position position="1149"/>
    </location>
</feature>
<feature type="splice variant" id="VSP_030016" description="In isoform 2." evidence="8">
    <original>Q</original>
    <variation>QIKEYLHIHNEISWEWDPSLNTKCVSYTHYTHSLK</variation>
    <location>
        <position position="920"/>
    </location>
</feature>
<feature type="splice variant" id="VSP_030017" description="In isoform 2." evidence="8">
    <original>TLRGMSEALVDKRVAPALVTLSSDPEF</original>
    <variation>LVKGVNETLVAQRVVPALITLSSDPEI</variation>
    <location>
        <begin position="991"/>
        <end position="1017"/>
    </location>
</feature>
<feature type="sequence variant" id="VAR_037660" description="In a colorectal cancer sample; somatic mutation; dbSNP:rs770815767." evidence="6">
    <original>G</original>
    <variation>E</variation>
    <location>
        <position position="929"/>
    </location>
</feature>
<keyword id="KW-0007">Acetylation</keyword>
<keyword id="KW-0025">Alternative splicing</keyword>
<keyword id="KW-0175">Coiled coil</keyword>
<keyword id="KW-0967">Endosome</keyword>
<keyword id="KW-0333">Golgi apparatus</keyword>
<keyword id="KW-0445">Lipid transport</keyword>
<keyword id="KW-0597">Phosphoprotein</keyword>
<keyword id="KW-1267">Proteomics identification</keyword>
<keyword id="KW-1185">Reference proteome</keyword>
<keyword id="KW-0677">Repeat</keyword>
<keyword id="KW-0813">Transport</keyword>
<comment type="function">
    <text evidence="7">Regulates intracellular cholesterol distribution from recycling endosomes to the trans-Golgi network through interactions with RAB11 and OSBP (PubMed:29514919). Functions in membrane tethering and promotes OSBP-mediated cholesterol transfer between RAB11-bound recycling endosomes and OSBP-bound Golgi-like membranes (PubMed:29514919).</text>
</comment>
<comment type="subcellular location">
    <subcellularLocation>
        <location evidence="7">Recycling endosome</location>
    </subcellularLocation>
    <subcellularLocation>
        <location evidence="7">Golgi apparatus</location>
        <location evidence="7">trans-Golgi network</location>
    </subcellularLocation>
    <text evidence="1 7">Translocated to the trans-Golgi network area in an OSBP-dependent manner (PubMed:29514919). Colocalizes with RAB11A in recycling endosomes (By similarity). Found in a complex composed of RELCH, OSBP1 and RAB11A (By similarity).</text>
</comment>
<comment type="alternative products">
    <event type="alternative splicing"/>
    <isoform>
        <id>Q9P260-1</id>
        <name>1</name>
        <sequence type="displayed"/>
    </isoform>
    <isoform>
        <id>Q9P260-2</id>
        <name>2</name>
        <sequence type="described" ref="VSP_030016 VSP_030017"/>
    </isoform>
</comment>
<protein>
    <recommendedName>
        <fullName evidence="10">RAB11-binding protein RELCH</fullName>
    </recommendedName>
    <alternativeName>
        <fullName>LisH domain and HEAT repeat-containing protein KIAA1468</fullName>
    </alternativeName>
    <alternativeName>
        <fullName evidence="11">RAB11 binding and LisH domain, coiled-coil and HEAT repeat-containing</fullName>
    </alternativeName>
    <alternativeName>
        <fullName evidence="9">RAB11-binding protein containing LisH, coiled-coil, and HEAT repeats</fullName>
    </alternativeName>
</protein>
<evidence type="ECO:0000250" key="1">
    <source>
        <dbReference type="UniProtKB" id="Q148V7"/>
    </source>
</evidence>
<evidence type="ECO:0000255" key="2"/>
<evidence type="ECO:0000255" key="3">
    <source>
        <dbReference type="PROSITE-ProRule" id="PRU00103"/>
    </source>
</evidence>
<evidence type="ECO:0000255" key="4">
    <source>
        <dbReference type="PROSITE-ProRule" id="PRU00126"/>
    </source>
</evidence>
<evidence type="ECO:0000256" key="5">
    <source>
        <dbReference type="SAM" id="MobiDB-lite"/>
    </source>
</evidence>
<evidence type="ECO:0000269" key="6">
    <source>
    </source>
</evidence>
<evidence type="ECO:0000269" key="7">
    <source>
    </source>
</evidence>
<evidence type="ECO:0000303" key="8">
    <source>
    </source>
</evidence>
<evidence type="ECO:0000303" key="9">
    <source>
    </source>
</evidence>
<evidence type="ECO:0000305" key="10"/>
<evidence type="ECO:0000312" key="11">
    <source>
        <dbReference type="HGNC" id="HGNC:29289"/>
    </source>
</evidence>
<evidence type="ECO:0007744" key="12">
    <source>
    </source>
</evidence>
<evidence type="ECO:0007744" key="13">
    <source>
    </source>
</evidence>
<evidence type="ECO:0007744" key="14">
    <source>
    </source>
</evidence>
<evidence type="ECO:0007744" key="15">
    <source>
    </source>
</evidence>
<evidence type="ECO:0007744" key="16">
    <source>
    </source>
</evidence>
<reference key="1">
    <citation type="journal article" date="2005" name="Nature">
        <title>DNA sequence and analysis of human chromosome 18.</title>
        <authorList>
            <person name="Nusbaum C."/>
            <person name="Zody M.C."/>
            <person name="Borowsky M.L."/>
            <person name="Kamal M."/>
            <person name="Kodira C.D."/>
            <person name="Taylor T.D."/>
            <person name="Whittaker C.A."/>
            <person name="Chang J.L."/>
            <person name="Cuomo C.A."/>
            <person name="Dewar K."/>
            <person name="FitzGerald M.G."/>
            <person name="Yang X."/>
            <person name="Abouelleil A."/>
            <person name="Allen N.R."/>
            <person name="Anderson S."/>
            <person name="Bloom T."/>
            <person name="Bugalter B."/>
            <person name="Butler J."/>
            <person name="Cook A."/>
            <person name="DeCaprio D."/>
            <person name="Engels R."/>
            <person name="Garber M."/>
            <person name="Gnirke A."/>
            <person name="Hafez N."/>
            <person name="Hall J.L."/>
            <person name="Norman C.H."/>
            <person name="Itoh T."/>
            <person name="Jaffe D.B."/>
            <person name="Kuroki Y."/>
            <person name="Lehoczky J."/>
            <person name="Lui A."/>
            <person name="Macdonald P."/>
            <person name="Mauceli E."/>
            <person name="Mikkelsen T.S."/>
            <person name="Naylor J.W."/>
            <person name="Nicol R."/>
            <person name="Nguyen C."/>
            <person name="Noguchi H."/>
            <person name="O'Leary S.B."/>
            <person name="Piqani B."/>
            <person name="Smith C.L."/>
            <person name="Talamas J.A."/>
            <person name="Topham K."/>
            <person name="Totoki Y."/>
            <person name="Toyoda A."/>
            <person name="Wain H.M."/>
            <person name="Young S.K."/>
            <person name="Zeng Q."/>
            <person name="Zimmer A.R."/>
            <person name="Fujiyama A."/>
            <person name="Hattori M."/>
            <person name="Birren B.W."/>
            <person name="Sakaki Y."/>
            <person name="Lander E.S."/>
        </authorList>
    </citation>
    <scope>NUCLEOTIDE SEQUENCE [LARGE SCALE GENOMIC DNA]</scope>
</reference>
<reference key="2">
    <citation type="journal article" date="2000" name="DNA Res.">
        <title>Prediction of the coding sequences of unidentified human genes. XVII. The complete sequences of 100 new cDNA clones from brain which code for large proteins in vitro.</title>
        <authorList>
            <person name="Nagase T."/>
            <person name="Kikuno R."/>
            <person name="Ishikawa K."/>
            <person name="Hirosawa M."/>
            <person name="Ohara O."/>
        </authorList>
    </citation>
    <scope>NUCLEOTIDE SEQUENCE [LARGE SCALE MRNA] OF 266-1216 (ISOFORM 2)</scope>
    <source>
        <tissue>Brain</tissue>
    </source>
</reference>
<reference key="3">
    <citation type="journal article" date="2008" name="Mol. Cell">
        <title>Kinase-selective enrichment enables quantitative phosphoproteomics of the kinome across the cell cycle.</title>
        <authorList>
            <person name="Daub H."/>
            <person name="Olsen J.V."/>
            <person name="Bairlein M."/>
            <person name="Gnad F."/>
            <person name="Oppermann F.S."/>
            <person name="Korner R."/>
            <person name="Greff Z."/>
            <person name="Keri G."/>
            <person name="Stemmann O."/>
            <person name="Mann M."/>
        </authorList>
    </citation>
    <scope>IDENTIFICATION BY MASS SPECTROMETRY [LARGE SCALE ANALYSIS]</scope>
    <source>
        <tissue>Cervix carcinoma</tissue>
    </source>
</reference>
<reference key="4">
    <citation type="journal article" date="2008" name="Proc. Natl. Acad. Sci. U.S.A.">
        <title>A quantitative atlas of mitotic phosphorylation.</title>
        <authorList>
            <person name="Dephoure N."/>
            <person name="Zhou C."/>
            <person name="Villen J."/>
            <person name="Beausoleil S.A."/>
            <person name="Bakalarski C.E."/>
            <person name="Elledge S.J."/>
            <person name="Gygi S.P."/>
        </authorList>
    </citation>
    <scope>PHOSPHORYLATION [LARGE SCALE ANALYSIS] AT SER-180; SER-182; THR-183 AND SER-186</scope>
    <scope>IDENTIFICATION BY MASS SPECTROMETRY [LARGE SCALE ANALYSIS]</scope>
    <source>
        <tissue>Cervix carcinoma</tissue>
    </source>
</reference>
<reference key="5">
    <citation type="journal article" date="2010" name="Sci. Signal.">
        <title>Quantitative phosphoproteomics reveals widespread full phosphorylation site occupancy during mitosis.</title>
        <authorList>
            <person name="Olsen J.V."/>
            <person name="Vermeulen M."/>
            <person name="Santamaria A."/>
            <person name="Kumar C."/>
            <person name="Miller M.L."/>
            <person name="Jensen L.J."/>
            <person name="Gnad F."/>
            <person name="Cox J."/>
            <person name="Jensen T.S."/>
            <person name="Nigg E.A."/>
            <person name="Brunak S."/>
            <person name="Mann M."/>
        </authorList>
    </citation>
    <scope>PHOSPHORYLATION [LARGE SCALE ANALYSIS] AT SER-54 AND SER-56</scope>
    <scope>IDENTIFICATION BY MASS SPECTROMETRY [LARGE SCALE ANALYSIS]</scope>
    <source>
        <tissue>Cervix carcinoma</tissue>
    </source>
</reference>
<reference key="6">
    <citation type="journal article" date="2011" name="BMC Syst. Biol.">
        <title>Initial characterization of the human central proteome.</title>
        <authorList>
            <person name="Burkard T.R."/>
            <person name="Planyavsky M."/>
            <person name="Kaupe I."/>
            <person name="Breitwieser F.P."/>
            <person name="Buerckstuemmer T."/>
            <person name="Bennett K.L."/>
            <person name="Superti-Furga G."/>
            <person name="Colinge J."/>
        </authorList>
    </citation>
    <scope>IDENTIFICATION BY MASS SPECTROMETRY [LARGE SCALE ANALYSIS]</scope>
</reference>
<reference key="7">
    <citation type="journal article" date="2011" name="Sci. Signal.">
        <title>System-wide temporal characterization of the proteome and phosphoproteome of human embryonic stem cell differentiation.</title>
        <authorList>
            <person name="Rigbolt K.T."/>
            <person name="Prokhorova T.A."/>
            <person name="Akimov V."/>
            <person name="Henningsen J."/>
            <person name="Johansen P.T."/>
            <person name="Kratchmarova I."/>
            <person name="Kassem M."/>
            <person name="Mann M."/>
            <person name="Olsen J.V."/>
            <person name="Blagoev B."/>
        </authorList>
    </citation>
    <scope>ACETYLATION [LARGE SCALE ANALYSIS] AT ALA-2</scope>
    <scope>PHOSPHORYLATION [LARGE SCALE ANALYSIS] AT SER-20; SER-22 AND SER-180</scope>
    <scope>CLEAVAGE OF INITIATOR METHIONINE [LARGE SCALE ANALYSIS]</scope>
    <scope>IDENTIFICATION BY MASS SPECTROMETRY [LARGE SCALE ANALYSIS]</scope>
</reference>
<reference key="8">
    <citation type="journal article" date="2013" name="J. Proteome Res.">
        <title>Toward a comprehensive characterization of a human cancer cell phosphoproteome.</title>
        <authorList>
            <person name="Zhou H."/>
            <person name="Di Palma S."/>
            <person name="Preisinger C."/>
            <person name="Peng M."/>
            <person name="Polat A.N."/>
            <person name="Heck A.J."/>
            <person name="Mohammed S."/>
        </authorList>
    </citation>
    <scope>PHOSPHORYLATION [LARGE SCALE ANALYSIS] AT SER-180 AND SER-453</scope>
    <scope>IDENTIFICATION BY MASS SPECTROMETRY [LARGE SCALE ANALYSIS]</scope>
    <source>
        <tissue>Cervix carcinoma</tissue>
        <tissue>Erythroleukemia</tissue>
    </source>
</reference>
<reference key="9">
    <citation type="journal article" date="2014" name="J. Proteomics">
        <title>An enzyme assisted RP-RPLC approach for in-depth analysis of human liver phosphoproteome.</title>
        <authorList>
            <person name="Bian Y."/>
            <person name="Song C."/>
            <person name="Cheng K."/>
            <person name="Dong M."/>
            <person name="Wang F."/>
            <person name="Huang J."/>
            <person name="Sun D."/>
            <person name="Wang L."/>
            <person name="Ye M."/>
            <person name="Zou H."/>
        </authorList>
    </citation>
    <scope>PHOSPHORYLATION [LARGE SCALE ANALYSIS] AT SER-180</scope>
    <scope>IDENTIFICATION BY MASS SPECTROMETRY [LARGE SCALE ANALYSIS]</scope>
    <source>
        <tissue>Liver</tissue>
    </source>
</reference>
<reference key="10">
    <citation type="journal article" date="2006" name="Science">
        <title>The consensus coding sequences of human breast and colorectal cancers.</title>
        <authorList>
            <person name="Sjoeblom T."/>
            <person name="Jones S."/>
            <person name="Wood L.D."/>
            <person name="Parsons D.W."/>
            <person name="Lin J."/>
            <person name="Barber T.D."/>
            <person name="Mandelker D."/>
            <person name="Leary R.J."/>
            <person name="Ptak J."/>
            <person name="Silliman N."/>
            <person name="Szabo S."/>
            <person name="Buckhaults P."/>
            <person name="Farrell C."/>
            <person name="Meeh P."/>
            <person name="Markowitz S.D."/>
            <person name="Willis J."/>
            <person name="Dawson D."/>
            <person name="Willson J.K.V."/>
            <person name="Gazdar A.F."/>
            <person name="Hartigan J."/>
            <person name="Wu L."/>
            <person name="Liu C."/>
            <person name="Parmigiani G."/>
            <person name="Park B.H."/>
            <person name="Bachman K.E."/>
            <person name="Papadopoulos N."/>
            <person name="Vogelstein B."/>
            <person name="Kinzler K.W."/>
            <person name="Velculescu V.E."/>
        </authorList>
    </citation>
    <scope>VARIANT [LARGE SCALE ANALYSIS] GLU-929</scope>
</reference>
<reference key="11">
    <citation type="journal article" date="2018" name="J. Cell Biol.">
        <title>The Rab11-binding protein RELCH/KIAA1468 controls intracellular cholesterol distribution.</title>
        <authorList>
            <person name="Sobajima T."/>
            <person name="Yoshimura S.I."/>
            <person name="Maeda T."/>
            <person name="Miyata H."/>
            <person name="Miyoshi E."/>
            <person name="Harada A."/>
        </authorList>
    </citation>
    <scope>SUBCELLULAR LOCATION</scope>
    <scope>FUNCTION</scope>
</reference>